<proteinExistence type="inferred from homology"/>
<name>RADB_METMP</name>
<sequence>MLEELLNGNIEKKTITQIYGPPGVGKTNICIISMLKAIENGKNVVYIDTEGSLSIERIKQLSGKDCDELLKNIIIYEPSSFEEQSEALEKIFLLENVGLIIIDGIVSLYRLELCDKINENTKLNRMLGKQISNLLKVSRQKNSGILITNQVKDSINGIEPAGGRLLEYWSKSIIKIEKSESIRKLTLEKHRHAKEGENLRFKILQNGLEIINKSYQ</sequence>
<feature type="chain" id="PRO_0000408225" description="DNA repair and recombination protein RadB">
    <location>
        <begin position="1"/>
        <end position="216"/>
    </location>
</feature>
<feature type="binding site" evidence="2">
    <location>
        <begin position="20"/>
        <end position="27"/>
    </location>
    <ligand>
        <name>ATP</name>
        <dbReference type="ChEBI" id="CHEBI:30616"/>
    </ligand>
</feature>
<protein>
    <recommendedName>
        <fullName>DNA repair and recombination protein RadB</fullName>
    </recommendedName>
</protein>
<reference key="1">
    <citation type="journal article" date="2004" name="J. Bacteriol.">
        <title>Complete genome sequence of the genetically tractable hydrogenotrophic methanogen Methanococcus maripaludis.</title>
        <authorList>
            <person name="Hendrickson E.L."/>
            <person name="Kaul R."/>
            <person name="Zhou Y."/>
            <person name="Bovee D."/>
            <person name="Chapman P."/>
            <person name="Chung J."/>
            <person name="Conway de Macario E."/>
            <person name="Dodsworth J.A."/>
            <person name="Gillett W."/>
            <person name="Graham D.E."/>
            <person name="Hackett M."/>
            <person name="Haydock A.K."/>
            <person name="Kang A."/>
            <person name="Land M.L."/>
            <person name="Levy R."/>
            <person name="Lie T.J."/>
            <person name="Major T.A."/>
            <person name="Moore B.C."/>
            <person name="Porat I."/>
            <person name="Palmeiri A."/>
            <person name="Rouse G."/>
            <person name="Saenphimmachak C."/>
            <person name="Soell D."/>
            <person name="Van Dien S."/>
            <person name="Wang T."/>
            <person name="Whitman W.B."/>
            <person name="Xia Q."/>
            <person name="Zhang Y."/>
            <person name="Larimer F.W."/>
            <person name="Olson M.V."/>
            <person name="Leigh J.A."/>
        </authorList>
    </citation>
    <scope>NUCLEOTIDE SEQUENCE [LARGE SCALE GENOMIC DNA]</scope>
    <source>
        <strain>DSM 14266 / JCM 13030 / NBRC 101832 / S2 / LL</strain>
    </source>
</reference>
<dbReference type="EMBL" id="BX950229">
    <property type="protein sequence ID" value="CAF30173.1"/>
    <property type="molecule type" value="Genomic_DNA"/>
</dbReference>
<dbReference type="RefSeq" id="WP_011170561.1">
    <property type="nucleotide sequence ID" value="NC_005791.1"/>
</dbReference>
<dbReference type="SMR" id="P0CW61"/>
<dbReference type="STRING" id="267377.MMP0617"/>
<dbReference type="EnsemblBacteria" id="CAF30173">
    <property type="protein sequence ID" value="CAF30173"/>
    <property type="gene ID" value="MMP0617"/>
</dbReference>
<dbReference type="GeneID" id="41279084"/>
<dbReference type="KEGG" id="mmp:MMP0617"/>
<dbReference type="PATRIC" id="fig|267377.15.peg.632"/>
<dbReference type="eggNOG" id="arCOG00417">
    <property type="taxonomic scope" value="Archaea"/>
</dbReference>
<dbReference type="HOGENOM" id="CLU_041732_2_0_2"/>
<dbReference type="OrthoDB" id="17644at2157"/>
<dbReference type="Proteomes" id="UP000000590">
    <property type="component" value="Chromosome"/>
</dbReference>
<dbReference type="GO" id="GO:0005524">
    <property type="term" value="F:ATP binding"/>
    <property type="evidence" value="ECO:0007669"/>
    <property type="project" value="UniProtKB-UniRule"/>
</dbReference>
<dbReference type="GO" id="GO:0016887">
    <property type="term" value="F:ATP hydrolysis activity"/>
    <property type="evidence" value="ECO:0007669"/>
    <property type="project" value="InterPro"/>
</dbReference>
<dbReference type="GO" id="GO:0140664">
    <property type="term" value="F:ATP-dependent DNA damage sensor activity"/>
    <property type="evidence" value="ECO:0007669"/>
    <property type="project" value="InterPro"/>
</dbReference>
<dbReference type="GO" id="GO:0003684">
    <property type="term" value="F:damaged DNA binding"/>
    <property type="evidence" value="ECO:0007669"/>
    <property type="project" value="UniProtKB-UniRule"/>
</dbReference>
<dbReference type="GO" id="GO:0006310">
    <property type="term" value="P:DNA recombination"/>
    <property type="evidence" value="ECO:0007669"/>
    <property type="project" value="UniProtKB-UniRule"/>
</dbReference>
<dbReference type="GO" id="GO:0006281">
    <property type="term" value="P:DNA repair"/>
    <property type="evidence" value="ECO:0007669"/>
    <property type="project" value="UniProtKB-UniRule"/>
</dbReference>
<dbReference type="Gene3D" id="3.40.50.300">
    <property type="entry name" value="P-loop containing nucleotide triphosphate hydrolases"/>
    <property type="match status" value="1"/>
</dbReference>
<dbReference type="HAMAP" id="MF_00350">
    <property type="entry name" value="RadB"/>
    <property type="match status" value="1"/>
</dbReference>
<dbReference type="InterPro" id="IPR003593">
    <property type="entry name" value="AAA+_ATPase"/>
</dbReference>
<dbReference type="InterPro" id="IPR013632">
    <property type="entry name" value="DNA_recomb/repair_Rad51_C"/>
</dbReference>
<dbReference type="InterPro" id="IPR011939">
    <property type="entry name" value="DNA_repair_and_recomb_RadB"/>
</dbReference>
<dbReference type="InterPro" id="IPR027417">
    <property type="entry name" value="P-loop_NTPase"/>
</dbReference>
<dbReference type="InterPro" id="IPR020588">
    <property type="entry name" value="RecA_ATP-bd"/>
</dbReference>
<dbReference type="NCBIfam" id="TIGR02237">
    <property type="entry name" value="recomb_radB"/>
    <property type="match status" value="1"/>
</dbReference>
<dbReference type="PANTHER" id="PTHR22942:SF47">
    <property type="entry name" value="DNA REPAIR AND RECOMBINATION PROTEIN RADB"/>
    <property type="match status" value="1"/>
</dbReference>
<dbReference type="PANTHER" id="PTHR22942">
    <property type="entry name" value="RECA/RAD51/RADA DNA STRAND-PAIRING FAMILY MEMBER"/>
    <property type="match status" value="1"/>
</dbReference>
<dbReference type="Pfam" id="PF08423">
    <property type="entry name" value="Rad51"/>
    <property type="match status" value="1"/>
</dbReference>
<dbReference type="PIRSF" id="PIRSF003336">
    <property type="entry name" value="RadB"/>
    <property type="match status" value="1"/>
</dbReference>
<dbReference type="SMART" id="SM00382">
    <property type="entry name" value="AAA"/>
    <property type="match status" value="1"/>
</dbReference>
<dbReference type="SUPFAM" id="SSF52540">
    <property type="entry name" value="P-loop containing nucleoside triphosphate hydrolases"/>
    <property type="match status" value="1"/>
</dbReference>
<dbReference type="PROSITE" id="PS50162">
    <property type="entry name" value="RECA_2"/>
    <property type="match status" value="1"/>
</dbReference>
<comment type="function">
    <text evidence="1">Involved in DNA repair and in homologous recombination. May regulate the cleavage reactions of the branch-structured DNA. Has a very weak ATPase activity that is not stimulated by DNA. Binds DNA but does not promote DNA strands exchange (By similarity).</text>
</comment>
<comment type="similarity">
    <text evidence="3">Belongs to the eukaryotic RecA-like protein family. RadB subfamily.</text>
</comment>
<organism>
    <name type="scientific">Methanococcus maripaludis (strain DSM 14266 / JCM 13030 / NBRC 101832 / S2 / LL)</name>
    <dbReference type="NCBI Taxonomy" id="267377"/>
    <lineage>
        <taxon>Archaea</taxon>
        <taxon>Methanobacteriati</taxon>
        <taxon>Methanobacteriota</taxon>
        <taxon>Methanomada group</taxon>
        <taxon>Methanococci</taxon>
        <taxon>Methanococcales</taxon>
        <taxon>Methanococcaceae</taxon>
        <taxon>Methanococcus</taxon>
    </lineage>
</organism>
<gene>
    <name type="primary">radB</name>
    <name type="ordered locus">MMP0617</name>
</gene>
<evidence type="ECO:0000250" key="1"/>
<evidence type="ECO:0000255" key="2"/>
<evidence type="ECO:0000305" key="3"/>
<accession>P0CW61</accession>
<accession>O50248</accession>
<keyword id="KW-0067">ATP-binding</keyword>
<keyword id="KW-0227">DNA damage</keyword>
<keyword id="KW-0233">DNA recombination</keyword>
<keyword id="KW-0238">DNA-binding</keyword>
<keyword id="KW-0547">Nucleotide-binding</keyword>
<keyword id="KW-1185">Reference proteome</keyword>